<protein>
    <recommendedName>
        <fullName evidence="1">Ribosome-binding factor A</fullName>
    </recommendedName>
</protein>
<reference key="1">
    <citation type="journal article" date="2010" name="PLoS ONE">
        <title>The complete multipartite genome sequence of Cupriavidus necator JMP134, a versatile pollutant degrader.</title>
        <authorList>
            <person name="Lykidis A."/>
            <person name="Perez-Pantoja D."/>
            <person name="Ledger T."/>
            <person name="Mavromatis K."/>
            <person name="Anderson I.J."/>
            <person name="Ivanova N.N."/>
            <person name="Hooper S.D."/>
            <person name="Lapidus A."/>
            <person name="Lucas S."/>
            <person name="Gonzalez B."/>
            <person name="Kyrpides N.C."/>
        </authorList>
    </citation>
    <scope>NUCLEOTIDE SEQUENCE [LARGE SCALE GENOMIC DNA]</scope>
    <source>
        <strain>JMP134 / LMG 1197</strain>
    </source>
</reference>
<feature type="chain" id="PRO_1000000184" description="Ribosome-binding factor A">
    <location>
        <begin position="1"/>
        <end position="122"/>
    </location>
</feature>
<dbReference type="EMBL" id="CP000090">
    <property type="protein sequence ID" value="AAZ61391.1"/>
    <property type="molecule type" value="Genomic_DNA"/>
</dbReference>
<dbReference type="SMR" id="Q46ZP2"/>
<dbReference type="STRING" id="264198.Reut_A2027"/>
<dbReference type="KEGG" id="reu:Reut_A2027"/>
<dbReference type="eggNOG" id="COG0858">
    <property type="taxonomic scope" value="Bacteria"/>
</dbReference>
<dbReference type="HOGENOM" id="CLU_089475_5_1_4"/>
<dbReference type="OrthoDB" id="307788at2"/>
<dbReference type="GO" id="GO:0005829">
    <property type="term" value="C:cytosol"/>
    <property type="evidence" value="ECO:0007669"/>
    <property type="project" value="TreeGrafter"/>
</dbReference>
<dbReference type="GO" id="GO:0043024">
    <property type="term" value="F:ribosomal small subunit binding"/>
    <property type="evidence" value="ECO:0007669"/>
    <property type="project" value="TreeGrafter"/>
</dbReference>
<dbReference type="GO" id="GO:0030490">
    <property type="term" value="P:maturation of SSU-rRNA"/>
    <property type="evidence" value="ECO:0007669"/>
    <property type="project" value="UniProtKB-UniRule"/>
</dbReference>
<dbReference type="Gene3D" id="3.30.300.20">
    <property type="match status" value="1"/>
</dbReference>
<dbReference type="HAMAP" id="MF_00003">
    <property type="entry name" value="RbfA"/>
    <property type="match status" value="1"/>
</dbReference>
<dbReference type="InterPro" id="IPR015946">
    <property type="entry name" value="KH_dom-like_a/b"/>
</dbReference>
<dbReference type="InterPro" id="IPR000238">
    <property type="entry name" value="RbfA"/>
</dbReference>
<dbReference type="InterPro" id="IPR023799">
    <property type="entry name" value="RbfA_dom_sf"/>
</dbReference>
<dbReference type="NCBIfam" id="TIGR00082">
    <property type="entry name" value="rbfA"/>
    <property type="match status" value="1"/>
</dbReference>
<dbReference type="PANTHER" id="PTHR33515">
    <property type="entry name" value="RIBOSOME-BINDING FACTOR A, CHLOROPLASTIC-RELATED"/>
    <property type="match status" value="1"/>
</dbReference>
<dbReference type="PANTHER" id="PTHR33515:SF1">
    <property type="entry name" value="RIBOSOME-BINDING FACTOR A, CHLOROPLASTIC-RELATED"/>
    <property type="match status" value="1"/>
</dbReference>
<dbReference type="Pfam" id="PF02033">
    <property type="entry name" value="RBFA"/>
    <property type="match status" value="1"/>
</dbReference>
<dbReference type="SUPFAM" id="SSF89919">
    <property type="entry name" value="Ribosome-binding factor A, RbfA"/>
    <property type="match status" value="1"/>
</dbReference>
<organism>
    <name type="scientific">Cupriavidus pinatubonensis (strain JMP 134 / LMG 1197)</name>
    <name type="common">Cupriavidus necator (strain JMP 134)</name>
    <dbReference type="NCBI Taxonomy" id="264198"/>
    <lineage>
        <taxon>Bacteria</taxon>
        <taxon>Pseudomonadati</taxon>
        <taxon>Pseudomonadota</taxon>
        <taxon>Betaproteobacteria</taxon>
        <taxon>Burkholderiales</taxon>
        <taxon>Burkholderiaceae</taxon>
        <taxon>Cupriavidus</taxon>
    </lineage>
</organism>
<keyword id="KW-0963">Cytoplasm</keyword>
<keyword id="KW-0690">Ribosome biogenesis</keyword>
<comment type="function">
    <text evidence="1">One of several proteins that assist in the late maturation steps of the functional core of the 30S ribosomal subunit. Associates with free 30S ribosomal subunits (but not with 30S subunits that are part of 70S ribosomes or polysomes). Required for efficient processing of 16S rRNA. May interact with the 5'-terminal helix region of 16S rRNA.</text>
</comment>
<comment type="subunit">
    <text evidence="1">Monomer. Binds 30S ribosomal subunits, but not 50S ribosomal subunits or 70S ribosomes.</text>
</comment>
<comment type="subcellular location">
    <subcellularLocation>
        <location evidence="1">Cytoplasm</location>
    </subcellularLocation>
</comment>
<comment type="similarity">
    <text evidence="1">Belongs to the RbfA family.</text>
</comment>
<accession>Q46ZP2</accession>
<sequence length="122" mass="13750">MAKKGNISSRNLRISDQIQKELAEMIQREIRDPRLGLVTLQSVALTPDYAHAKVYFTVLGAEPEVAAAILKEKAGYLHSLLFKRLHIHTVPTLHFHHDTSVEHAIEMSKLINEANATRSKDD</sequence>
<evidence type="ECO:0000255" key="1">
    <source>
        <dbReference type="HAMAP-Rule" id="MF_00003"/>
    </source>
</evidence>
<name>RBFA_CUPPJ</name>
<proteinExistence type="inferred from homology"/>
<gene>
    <name evidence="1" type="primary">rbfA</name>
    <name type="ordered locus">Reut_A2027</name>
</gene>